<proteinExistence type="inferred from homology"/>
<comment type="function">
    <text evidence="3">Oxidoreductase required for the transfer of electrons from pyruvate to flavodoxin.</text>
</comment>
<comment type="catalytic activity">
    <reaction>
        <text>oxidized [flavodoxin] + pyruvate + CoA + 2 H(+) = reduced [flavodoxin] + acetyl-CoA + CO2</text>
        <dbReference type="Rhea" id="RHEA:44140"/>
        <dbReference type="Rhea" id="RHEA-COMP:10622"/>
        <dbReference type="Rhea" id="RHEA-COMP:10623"/>
        <dbReference type="ChEBI" id="CHEBI:15361"/>
        <dbReference type="ChEBI" id="CHEBI:15378"/>
        <dbReference type="ChEBI" id="CHEBI:16526"/>
        <dbReference type="ChEBI" id="CHEBI:57287"/>
        <dbReference type="ChEBI" id="CHEBI:57288"/>
        <dbReference type="ChEBI" id="CHEBI:57618"/>
        <dbReference type="ChEBI" id="CHEBI:58210"/>
    </reaction>
</comment>
<comment type="cofactor">
    <cofactor evidence="1">
        <name>[4Fe-4S] cluster</name>
        <dbReference type="ChEBI" id="CHEBI:49883"/>
    </cofactor>
    <text evidence="1">Binds 3 [4Fe-4S] clusters per subunit.</text>
</comment>
<comment type="similarity">
    <text evidence="3">Belongs to the pyruvate:ferredoxin/flavodoxin oxidoreductase family.</text>
</comment>
<reference key="1">
    <citation type="journal article" date="1995" name="DNA Res.">
        <title>Sequence analysis of the genome of the unicellular cyanobacterium Synechocystis sp. strain PCC6803. I. Sequence features in the 1 Mb region from map positions 64% to 92% of the genome.</title>
        <authorList>
            <person name="Kaneko T."/>
            <person name="Tanaka A."/>
            <person name="Sato S."/>
            <person name="Kotani H."/>
            <person name="Sazuka T."/>
            <person name="Miyajima N."/>
            <person name="Sugiura M."/>
            <person name="Tabata S."/>
        </authorList>
    </citation>
    <scope>NUCLEOTIDE SEQUENCE [LARGE SCALE GENOMIC DNA]</scope>
    <source>
        <strain>ATCC 27184 / PCC 6803 / N-1</strain>
    </source>
</reference>
<reference key="2">
    <citation type="journal article" date="1996" name="DNA Res.">
        <title>Sequence analysis of the genome of the unicellular cyanobacterium Synechocystis sp. strain PCC6803. II. Sequence determination of the entire genome and assignment of potential protein-coding regions.</title>
        <authorList>
            <person name="Kaneko T."/>
            <person name="Sato S."/>
            <person name="Kotani H."/>
            <person name="Tanaka A."/>
            <person name="Asamizu E."/>
            <person name="Nakamura Y."/>
            <person name="Miyajima N."/>
            <person name="Hirosawa M."/>
            <person name="Sugiura M."/>
            <person name="Sasamoto S."/>
            <person name="Kimura T."/>
            <person name="Hosouchi T."/>
            <person name="Matsuno A."/>
            <person name="Muraki A."/>
            <person name="Nakazaki N."/>
            <person name="Naruo K."/>
            <person name="Okumura S."/>
            <person name="Shimpo S."/>
            <person name="Takeuchi C."/>
            <person name="Wada T."/>
            <person name="Watanabe A."/>
            <person name="Yamada M."/>
            <person name="Yasuda M."/>
            <person name="Tabata S."/>
        </authorList>
    </citation>
    <scope>NUCLEOTIDE SEQUENCE [LARGE SCALE GENOMIC DNA]</scope>
    <source>
        <strain>ATCC 27184 / PCC 6803 / Kazusa</strain>
    </source>
</reference>
<sequence length="1199" mass="131457">MSLPTYATLDGNEAVARVAYLLSEVIAIYPITPSSPMGEWSDAWAAEHRPNLWGTVPLVVEMQSEGGAAGTVHGALQSGALTTTFTASQGLMLMLPNMHKIAGELTAMVLHVAARSLAAQGLSIFGDHSDVMAARNTGFAMLSSNSVQEAHDFALIATATSFATRIPGLHFFDGFRTSHEEQKIELLPQEVLRGLIKDEDVLAHRGRALTPDRPKLRGTAQNPDVYFQARETVNPFYASYPNVLEQVMEQFGQLTGRHYRPYEYCGHPEAERVIVLMGSGAETAQETVDFLTAQGEKVGLLKVRLYRPFAGDRLVNALPKTVQKIAVLDRCKEPGSIGEPLYQDVLTAFFEAGMMPKIIGGRYGLSSKEFTPAMVKGVLDHLNQTNPKNHFTVGINDDLSHTSIDYDPSFSTEADSVVRAIFYGLGSDGTVGANKNSIKIIGEDTDNYAQGYFVYDSKKSGSVTVSHLRFGPNPILSTYLISQANFVACHQWEFLEQFEVLEPAVDGGVFLVNSPYGPEEIWREFPRKVQQEIIDKNLKVYTINANDVARDAGMGRRTNTVMQTCFFALAGVLPREEAIAKIKQSVQKTYGKKGQEIVEMNIKAVDSTLAHLYEVSVPETVSDDAPAMRPVVPDNAPVFVREVLGKIMARQGDDLPVSALPCDGTYPTATTQWEKRNVGHEIPVWDPDVCVQCGKCVIVCPHAVIRGKVYEEAELANAPVSFKFTNAKDHDWQGSKFTIQVAPEDCTGCGICVDVCPAKNKSQPRLRAINMAPQLPLREQERENWDFFLDLPNPDRLSLNLNKISHQQMQEPLFEFSGACAGCGETPYLKLVSQLFGDRMLVANATGCSSIYGGNLPTTPWAQNAEGRGPAWSNSLFEDNAEFGLGFRVAIDKQTEFAGELLKTFAGELGDSLVSEILNNAQTTEADIFEQRQLVEQVKQRLQNLETPQAQMFLSVADYLVKKSVWIIGGDGWAYDIGYGGLDHVLASGRNVNILVMDTEVYSNTGGQASKATPRAAVAKFAAGGKPSPKKDLGLMAMTYGNVYVASIAMGAKNEQSIKAFMEAEAYPGVSLIIAYSHCIAHGINMTTAMNHQKELVDSGRWLLYRYNPLLADEGKNPLQLDMGSPKVAIDKTVYSENRFAMLTRSQPEEAKRLMKLAQGDVNTRWAMYEYLAKRSLGGEINGNNHGVSPSPEVIAKSV</sequence>
<evidence type="ECO:0000250" key="1">
    <source>
        <dbReference type="UniProtKB" id="P94692"/>
    </source>
</evidence>
<evidence type="ECO:0000255" key="2">
    <source>
        <dbReference type="PROSITE-ProRule" id="PRU00711"/>
    </source>
</evidence>
<evidence type="ECO:0000305" key="3"/>
<name>NIFJ_SYNY3</name>
<protein>
    <recommendedName>
        <fullName>Putative pyruvate-flavodoxin oxidoreductase</fullName>
        <ecNumber>1.2.7.-</ecNumber>
    </recommendedName>
</protein>
<organism>
    <name type="scientific">Synechocystis sp. (strain ATCC 27184 / PCC 6803 / Kazusa)</name>
    <dbReference type="NCBI Taxonomy" id="1111708"/>
    <lineage>
        <taxon>Bacteria</taxon>
        <taxon>Bacillati</taxon>
        <taxon>Cyanobacteriota</taxon>
        <taxon>Cyanophyceae</taxon>
        <taxon>Synechococcales</taxon>
        <taxon>Merismopediaceae</taxon>
        <taxon>Synechocystis</taxon>
    </lineage>
</organism>
<gene>
    <name type="primary">nifJ</name>
    <name type="ordered locus">sll0741</name>
</gene>
<feature type="chain" id="PRO_0000215558" description="Putative pyruvate-flavodoxin oxidoreductase">
    <location>
        <begin position="1"/>
        <end position="1199"/>
    </location>
</feature>
<feature type="domain" description="4Fe-4S ferredoxin-type 1" evidence="2">
    <location>
        <begin position="681"/>
        <end position="710"/>
    </location>
</feature>
<feature type="domain" description="4Fe-4S ferredoxin-type 2" evidence="2">
    <location>
        <begin position="737"/>
        <end position="766"/>
    </location>
</feature>
<feature type="binding site" evidence="1">
    <location>
        <position position="690"/>
    </location>
    <ligand>
        <name>[4Fe-4S] cluster</name>
        <dbReference type="ChEBI" id="CHEBI:49883"/>
        <label>1</label>
    </ligand>
</feature>
<feature type="binding site" evidence="1">
    <location>
        <position position="693"/>
    </location>
    <ligand>
        <name>[4Fe-4S] cluster</name>
        <dbReference type="ChEBI" id="CHEBI:49883"/>
        <label>1</label>
    </ligand>
</feature>
<feature type="binding site" evidence="1">
    <location>
        <position position="696"/>
    </location>
    <ligand>
        <name>[4Fe-4S] cluster</name>
        <dbReference type="ChEBI" id="CHEBI:49883"/>
        <label>1</label>
    </ligand>
</feature>
<feature type="binding site" evidence="1">
    <location>
        <position position="700"/>
    </location>
    <ligand>
        <name>[4Fe-4S] cluster</name>
        <dbReference type="ChEBI" id="CHEBI:49883"/>
        <label>2</label>
    </ligand>
</feature>
<feature type="binding site" evidence="1">
    <location>
        <position position="746"/>
    </location>
    <ligand>
        <name>[4Fe-4S] cluster</name>
        <dbReference type="ChEBI" id="CHEBI:49883"/>
        <label>2</label>
    </ligand>
</feature>
<feature type="binding site" evidence="1">
    <location>
        <position position="749"/>
    </location>
    <ligand>
        <name>[4Fe-4S] cluster</name>
        <dbReference type="ChEBI" id="CHEBI:49883"/>
        <label>2</label>
    </ligand>
</feature>
<feature type="binding site" evidence="1">
    <location>
        <position position="752"/>
    </location>
    <ligand>
        <name>[4Fe-4S] cluster</name>
        <dbReference type="ChEBI" id="CHEBI:49883"/>
        <label>2</label>
    </ligand>
</feature>
<feature type="binding site" evidence="1">
    <location>
        <position position="756"/>
    </location>
    <ligand>
        <name>[4Fe-4S] cluster</name>
        <dbReference type="ChEBI" id="CHEBI:49883"/>
        <label>1</label>
    </ligand>
</feature>
<feature type="binding site" evidence="1">
    <location>
        <position position="820"/>
    </location>
    <ligand>
        <name>[4Fe-4S] cluster</name>
        <dbReference type="ChEBI" id="CHEBI:49883"/>
        <label>3</label>
    </ligand>
</feature>
<feature type="binding site" evidence="1">
    <location>
        <position position="823"/>
    </location>
    <ligand>
        <name>[4Fe-4S] cluster</name>
        <dbReference type="ChEBI" id="CHEBI:49883"/>
        <label>3</label>
    </ligand>
</feature>
<feature type="binding site" evidence="1">
    <location>
        <position position="848"/>
    </location>
    <ligand>
        <name>[4Fe-4S] cluster</name>
        <dbReference type="ChEBI" id="CHEBI:49883"/>
        <label>3</label>
    </ligand>
</feature>
<feature type="binding site" evidence="1">
    <location>
        <position position="1079"/>
    </location>
    <ligand>
        <name>[4Fe-4S] cluster</name>
        <dbReference type="ChEBI" id="CHEBI:49883"/>
        <label>3</label>
    </ligand>
</feature>
<accession>P52965</accession>
<dbReference type="EC" id="1.2.7.-"/>
<dbReference type="EMBL" id="BA000022">
    <property type="protein sequence ID" value="BAA10774.1"/>
    <property type="molecule type" value="Genomic_DNA"/>
</dbReference>
<dbReference type="PIR" id="S77082">
    <property type="entry name" value="S77082"/>
</dbReference>
<dbReference type="SMR" id="P52965"/>
<dbReference type="IntAct" id="P52965">
    <property type="interactions" value="2"/>
</dbReference>
<dbReference type="STRING" id="1148.gene:10500278"/>
<dbReference type="PaxDb" id="1148-1006618"/>
<dbReference type="EnsemblBacteria" id="BAA10774">
    <property type="protein sequence ID" value="BAA10774"/>
    <property type="gene ID" value="BAA10774"/>
</dbReference>
<dbReference type="KEGG" id="syn:sll0741"/>
<dbReference type="eggNOG" id="COG0674">
    <property type="taxonomic scope" value="Bacteria"/>
</dbReference>
<dbReference type="eggNOG" id="COG1013">
    <property type="taxonomic scope" value="Bacteria"/>
</dbReference>
<dbReference type="eggNOG" id="COG1014">
    <property type="taxonomic scope" value="Bacteria"/>
</dbReference>
<dbReference type="eggNOG" id="COG1146">
    <property type="taxonomic scope" value="Bacteria"/>
</dbReference>
<dbReference type="InParanoid" id="P52965"/>
<dbReference type="PhylomeDB" id="P52965"/>
<dbReference type="Proteomes" id="UP000001425">
    <property type="component" value="Chromosome"/>
</dbReference>
<dbReference type="GO" id="GO:0051539">
    <property type="term" value="F:4 iron, 4 sulfur cluster binding"/>
    <property type="evidence" value="ECO:0007669"/>
    <property type="project" value="UniProtKB-KW"/>
</dbReference>
<dbReference type="GO" id="GO:0005506">
    <property type="term" value="F:iron ion binding"/>
    <property type="evidence" value="ECO:0007669"/>
    <property type="project" value="InterPro"/>
</dbReference>
<dbReference type="GO" id="GO:0043873">
    <property type="term" value="F:pyruvate-flavodoxin oxidoreductase activity"/>
    <property type="evidence" value="ECO:0007669"/>
    <property type="project" value="RHEA"/>
</dbReference>
<dbReference type="GO" id="GO:0030976">
    <property type="term" value="F:thiamine pyrophosphate binding"/>
    <property type="evidence" value="ECO:0007669"/>
    <property type="project" value="InterPro"/>
</dbReference>
<dbReference type="GO" id="GO:0022900">
    <property type="term" value="P:electron transport chain"/>
    <property type="evidence" value="ECO:0007669"/>
    <property type="project" value="InterPro"/>
</dbReference>
<dbReference type="GO" id="GO:0009399">
    <property type="term" value="P:nitrogen fixation"/>
    <property type="evidence" value="ECO:0007669"/>
    <property type="project" value="UniProtKB-KW"/>
</dbReference>
<dbReference type="GO" id="GO:0006979">
    <property type="term" value="P:response to oxidative stress"/>
    <property type="evidence" value="ECO:0000318"/>
    <property type="project" value="GO_Central"/>
</dbReference>
<dbReference type="CDD" id="cd03377">
    <property type="entry name" value="TPP_PFOR_PNO"/>
    <property type="match status" value="1"/>
</dbReference>
<dbReference type="CDD" id="cd07034">
    <property type="entry name" value="TPP_PYR_PFOR_IOR-alpha_like"/>
    <property type="match status" value="1"/>
</dbReference>
<dbReference type="FunFam" id="3.30.70.20:FF:000022">
    <property type="entry name" value="Pyruvate:ferredoxin (Flavodoxin) oxidoreductase"/>
    <property type="match status" value="1"/>
</dbReference>
<dbReference type="FunFam" id="3.40.50.920:FF:000007">
    <property type="entry name" value="Pyruvate:ferredoxin (Flavodoxin) oxidoreductase"/>
    <property type="match status" value="1"/>
</dbReference>
<dbReference type="FunFam" id="3.40.50.970:FF:000012">
    <property type="entry name" value="Pyruvate:ferredoxin (Flavodoxin) oxidoreductase"/>
    <property type="match status" value="1"/>
</dbReference>
<dbReference type="FunFam" id="3.40.50.970:FF:000041">
    <property type="entry name" value="Pyruvate:ferredoxin (Flavodoxin) oxidoreductase"/>
    <property type="match status" value="1"/>
</dbReference>
<dbReference type="FunFam" id="3.40.920.10:FF:000001">
    <property type="entry name" value="Pyruvate:ferredoxin (Flavodoxin) oxidoreductase"/>
    <property type="match status" value="1"/>
</dbReference>
<dbReference type="Gene3D" id="3.30.70.20">
    <property type="match status" value="1"/>
</dbReference>
<dbReference type="Gene3D" id="3.40.50.920">
    <property type="match status" value="1"/>
</dbReference>
<dbReference type="Gene3D" id="3.40.50.970">
    <property type="match status" value="2"/>
</dbReference>
<dbReference type="Gene3D" id="3.40.920.10">
    <property type="entry name" value="Pyruvate-ferredoxin oxidoreductase, PFOR, domain III"/>
    <property type="match status" value="1"/>
</dbReference>
<dbReference type="Gene3D" id="4.10.780.10">
    <property type="entry name" value="Pyruvate-flavodoxin oxidoreductase, EKR domain"/>
    <property type="match status" value="1"/>
</dbReference>
<dbReference type="InterPro" id="IPR017896">
    <property type="entry name" value="4Fe4S_Fe-S-bd"/>
</dbReference>
<dbReference type="InterPro" id="IPR017900">
    <property type="entry name" value="4Fe4S_Fe_S_CS"/>
</dbReference>
<dbReference type="InterPro" id="IPR033412">
    <property type="entry name" value="PFOR_II"/>
</dbReference>
<dbReference type="InterPro" id="IPR050722">
    <property type="entry name" value="Pyruvate:ferred/Flavod_OxRd"/>
</dbReference>
<dbReference type="InterPro" id="IPR037112">
    <property type="entry name" value="Pyrv-flavodox_OxR_EKR_sf"/>
</dbReference>
<dbReference type="InterPro" id="IPR019456">
    <property type="entry name" value="Pyrv-flavodox_OxRtase_EKR"/>
</dbReference>
<dbReference type="InterPro" id="IPR019752">
    <property type="entry name" value="Pyrv/ketoisovalerate_OxRed_cat"/>
</dbReference>
<dbReference type="InterPro" id="IPR002880">
    <property type="entry name" value="Pyrv_Fd/Flavodoxin_OxRdtase_N"/>
</dbReference>
<dbReference type="InterPro" id="IPR011895">
    <property type="entry name" value="Pyrv_flavodox_OxRed"/>
</dbReference>
<dbReference type="InterPro" id="IPR002869">
    <property type="entry name" value="Pyrv_flavodox_OxRed_cen"/>
</dbReference>
<dbReference type="InterPro" id="IPR029061">
    <property type="entry name" value="THDP-binding"/>
</dbReference>
<dbReference type="InterPro" id="IPR011766">
    <property type="entry name" value="TPP_enzyme_TPP-bd"/>
</dbReference>
<dbReference type="InterPro" id="IPR009014">
    <property type="entry name" value="Transketo_C/PFOR_II"/>
</dbReference>
<dbReference type="NCBIfam" id="TIGR02176">
    <property type="entry name" value="pyruv_ox_red"/>
    <property type="match status" value="1"/>
</dbReference>
<dbReference type="PANTHER" id="PTHR32154">
    <property type="entry name" value="PYRUVATE-FLAVODOXIN OXIDOREDUCTASE-RELATED"/>
    <property type="match status" value="1"/>
</dbReference>
<dbReference type="PANTHER" id="PTHR32154:SF0">
    <property type="entry name" value="PYRUVATE-FLAVODOXIN OXIDOREDUCTASE-RELATED"/>
    <property type="match status" value="1"/>
</dbReference>
<dbReference type="Pfam" id="PF10371">
    <property type="entry name" value="EKR"/>
    <property type="match status" value="1"/>
</dbReference>
<dbReference type="Pfam" id="PF13484">
    <property type="entry name" value="Fer4_16"/>
    <property type="match status" value="1"/>
</dbReference>
<dbReference type="Pfam" id="PF17147">
    <property type="entry name" value="PFOR_II"/>
    <property type="match status" value="1"/>
</dbReference>
<dbReference type="Pfam" id="PF01558">
    <property type="entry name" value="POR"/>
    <property type="match status" value="1"/>
</dbReference>
<dbReference type="Pfam" id="PF01855">
    <property type="entry name" value="POR_N"/>
    <property type="match status" value="1"/>
</dbReference>
<dbReference type="Pfam" id="PF02775">
    <property type="entry name" value="TPP_enzyme_C"/>
    <property type="match status" value="1"/>
</dbReference>
<dbReference type="PIRSF" id="PIRSF000159">
    <property type="entry name" value="NifJ"/>
    <property type="match status" value="1"/>
</dbReference>
<dbReference type="SMART" id="SM00890">
    <property type="entry name" value="EKR"/>
    <property type="match status" value="1"/>
</dbReference>
<dbReference type="SUPFAM" id="SSF54862">
    <property type="entry name" value="4Fe-4S ferredoxins"/>
    <property type="match status" value="1"/>
</dbReference>
<dbReference type="SUPFAM" id="SSF53323">
    <property type="entry name" value="Pyruvate-ferredoxin oxidoreductase, PFOR, domain III"/>
    <property type="match status" value="1"/>
</dbReference>
<dbReference type="SUPFAM" id="SSF52518">
    <property type="entry name" value="Thiamin diphosphate-binding fold (THDP-binding)"/>
    <property type="match status" value="2"/>
</dbReference>
<dbReference type="SUPFAM" id="SSF52922">
    <property type="entry name" value="TK C-terminal domain-like"/>
    <property type="match status" value="1"/>
</dbReference>
<dbReference type="PROSITE" id="PS00198">
    <property type="entry name" value="4FE4S_FER_1"/>
    <property type="match status" value="2"/>
</dbReference>
<dbReference type="PROSITE" id="PS51379">
    <property type="entry name" value="4FE4S_FER_2"/>
    <property type="match status" value="2"/>
</dbReference>
<keyword id="KW-0004">4Fe-4S</keyword>
<keyword id="KW-0249">Electron transport</keyword>
<keyword id="KW-0408">Iron</keyword>
<keyword id="KW-0411">Iron-sulfur</keyword>
<keyword id="KW-0479">Metal-binding</keyword>
<keyword id="KW-0535">Nitrogen fixation</keyword>
<keyword id="KW-0560">Oxidoreductase</keyword>
<keyword id="KW-1185">Reference proteome</keyword>
<keyword id="KW-0677">Repeat</keyword>
<keyword id="KW-0813">Transport</keyword>